<name>NUCS_STRAW</name>
<evidence type="ECO:0000255" key="1">
    <source>
        <dbReference type="HAMAP-Rule" id="MF_00722"/>
    </source>
</evidence>
<proteinExistence type="inferred from homology"/>
<keyword id="KW-0963">Cytoplasm</keyword>
<keyword id="KW-0238">DNA-binding</keyword>
<keyword id="KW-0255">Endonuclease</keyword>
<keyword id="KW-0378">Hydrolase</keyword>
<keyword id="KW-0540">Nuclease</keyword>
<keyword id="KW-1185">Reference proteome</keyword>
<organism>
    <name type="scientific">Streptomyces avermitilis (strain ATCC 31267 / DSM 46492 / JCM 5070 / NBRC 14893 / NCIMB 12804 / NRRL 8165 / MA-4680)</name>
    <dbReference type="NCBI Taxonomy" id="227882"/>
    <lineage>
        <taxon>Bacteria</taxon>
        <taxon>Bacillati</taxon>
        <taxon>Actinomycetota</taxon>
        <taxon>Actinomycetes</taxon>
        <taxon>Kitasatosporales</taxon>
        <taxon>Streptomycetaceae</taxon>
        <taxon>Streptomyces</taxon>
    </lineage>
</organism>
<accession>Q82J98</accession>
<sequence>MRLVIARCSVDYAGRLTAHLPSAPRLILVKADGSVSIHADDRAYKPLNWMSPPCTLKEGSGDEEGVWTVINKAGEKLIITMEEILHDSSHELGVDPGLIKDGVEAHLQELLADRIETLGDGYTLIRREYMTAIGPVDILCRDATGQTVAVEIKRRGEIDGVEQLTRYLELLNRDPHLAPVRGVFAAQEIKPQARVLATDRGIGCTVLDYNAMRGIEDDKLRLF</sequence>
<feature type="chain" id="PRO_0000155686" description="Endonuclease NucS">
    <location>
        <begin position="1"/>
        <end position="223"/>
    </location>
</feature>
<dbReference type="EC" id="3.1.-.-" evidence="1"/>
<dbReference type="EMBL" id="BA000030">
    <property type="protein sequence ID" value="BAC70578.1"/>
    <property type="molecule type" value="Genomic_DNA"/>
</dbReference>
<dbReference type="RefSeq" id="WP_010984299.1">
    <property type="nucleotide sequence ID" value="NZ_JZJK01000041.1"/>
</dbReference>
<dbReference type="SMR" id="Q82J98"/>
<dbReference type="GeneID" id="41539953"/>
<dbReference type="KEGG" id="sma:SAVERM_2867"/>
<dbReference type="eggNOG" id="COG1637">
    <property type="taxonomic scope" value="Bacteria"/>
</dbReference>
<dbReference type="HOGENOM" id="CLU_069350_0_0_11"/>
<dbReference type="OrthoDB" id="3344925at2"/>
<dbReference type="Proteomes" id="UP000000428">
    <property type="component" value="Chromosome"/>
</dbReference>
<dbReference type="GO" id="GO:0005737">
    <property type="term" value="C:cytoplasm"/>
    <property type="evidence" value="ECO:0007669"/>
    <property type="project" value="UniProtKB-SubCell"/>
</dbReference>
<dbReference type="GO" id="GO:0003677">
    <property type="term" value="F:DNA binding"/>
    <property type="evidence" value="ECO:0007669"/>
    <property type="project" value="UniProtKB-KW"/>
</dbReference>
<dbReference type="GO" id="GO:0000014">
    <property type="term" value="F:single-stranded DNA endodeoxyribonuclease activity"/>
    <property type="evidence" value="ECO:0007669"/>
    <property type="project" value="UniProtKB-UniRule"/>
</dbReference>
<dbReference type="CDD" id="cd22341">
    <property type="entry name" value="NucS-like"/>
    <property type="match status" value="1"/>
</dbReference>
<dbReference type="Gene3D" id="2.70.180.20">
    <property type="match status" value="1"/>
</dbReference>
<dbReference type="Gene3D" id="3.40.1350.10">
    <property type="match status" value="1"/>
</dbReference>
<dbReference type="HAMAP" id="MF_00722">
    <property type="entry name" value="NucS"/>
    <property type="match status" value="1"/>
</dbReference>
<dbReference type="InterPro" id="IPR002793">
    <property type="entry name" value="Endonuclease_NucS"/>
</dbReference>
<dbReference type="InterPro" id="IPR048301">
    <property type="entry name" value="NucS_C"/>
</dbReference>
<dbReference type="InterPro" id="IPR048302">
    <property type="entry name" value="NucS_N"/>
</dbReference>
<dbReference type="InterPro" id="IPR049173">
    <property type="entry name" value="NucS_N_sf"/>
</dbReference>
<dbReference type="InterPro" id="IPR011856">
    <property type="entry name" value="tRNA_endonuc-like_dom_sf"/>
</dbReference>
<dbReference type="NCBIfam" id="NF002876">
    <property type="entry name" value="PRK03298.1"/>
    <property type="match status" value="1"/>
</dbReference>
<dbReference type="PANTHER" id="PTHR38814">
    <property type="entry name" value="ENDONUCLEASE NUCS"/>
    <property type="match status" value="1"/>
</dbReference>
<dbReference type="PANTHER" id="PTHR38814:SF1">
    <property type="entry name" value="ENDONUCLEASE NUCS"/>
    <property type="match status" value="1"/>
</dbReference>
<dbReference type="Pfam" id="PF01939">
    <property type="entry name" value="NucS_C"/>
    <property type="match status" value="1"/>
</dbReference>
<dbReference type="Pfam" id="PF21003">
    <property type="entry name" value="NucS_N"/>
    <property type="match status" value="1"/>
</dbReference>
<protein>
    <recommendedName>
        <fullName evidence="1">Endonuclease NucS</fullName>
        <ecNumber evidence="1">3.1.-.-</ecNumber>
    </recommendedName>
</protein>
<reference key="1">
    <citation type="journal article" date="2001" name="Proc. Natl. Acad. Sci. U.S.A.">
        <title>Genome sequence of an industrial microorganism Streptomyces avermitilis: deducing the ability of producing secondary metabolites.</title>
        <authorList>
            <person name="Omura S."/>
            <person name="Ikeda H."/>
            <person name="Ishikawa J."/>
            <person name="Hanamoto A."/>
            <person name="Takahashi C."/>
            <person name="Shinose M."/>
            <person name="Takahashi Y."/>
            <person name="Horikawa H."/>
            <person name="Nakazawa H."/>
            <person name="Osonoe T."/>
            <person name="Kikuchi H."/>
            <person name="Shiba T."/>
            <person name="Sakaki Y."/>
            <person name="Hattori M."/>
        </authorList>
    </citation>
    <scope>NUCLEOTIDE SEQUENCE [LARGE SCALE GENOMIC DNA]</scope>
    <source>
        <strain>ATCC 31267 / DSM 46492 / JCM 5070 / NBRC 14893 / NCIMB 12804 / NRRL 8165 / MA-4680</strain>
    </source>
</reference>
<reference key="2">
    <citation type="journal article" date="2003" name="Nat. Biotechnol.">
        <title>Complete genome sequence and comparative analysis of the industrial microorganism Streptomyces avermitilis.</title>
        <authorList>
            <person name="Ikeda H."/>
            <person name="Ishikawa J."/>
            <person name="Hanamoto A."/>
            <person name="Shinose M."/>
            <person name="Kikuchi H."/>
            <person name="Shiba T."/>
            <person name="Sakaki Y."/>
            <person name="Hattori M."/>
            <person name="Omura S."/>
        </authorList>
    </citation>
    <scope>NUCLEOTIDE SEQUENCE [LARGE SCALE GENOMIC DNA]</scope>
    <source>
        <strain>ATCC 31267 / DSM 46492 / JCM 5070 / NBRC 14893 / NCIMB 12804 / NRRL 8165 / MA-4680</strain>
    </source>
</reference>
<gene>
    <name evidence="1" type="primary">nucS</name>
    <name type="ordered locus">SAV_2867</name>
</gene>
<comment type="function">
    <text evidence="1">Cleaves both 3' and 5' ssDNA extremities of branched DNA structures.</text>
</comment>
<comment type="subcellular location">
    <subcellularLocation>
        <location evidence="1">Cytoplasm</location>
    </subcellularLocation>
</comment>
<comment type="similarity">
    <text evidence="1">Belongs to the NucS endonuclease family.</text>
</comment>